<keyword id="KW-0963">Cytoplasm</keyword>
<keyword id="KW-0238">DNA-binding</keyword>
<keyword id="KW-1185">Reference proteome</keyword>
<keyword id="KW-0678">Repressor</keyword>
<keyword id="KW-0804">Transcription</keyword>
<keyword id="KW-0805">Transcription regulation</keyword>
<proteinExistence type="evidence at protein level"/>
<comment type="function">
    <text evidence="1">DNA-binding global transcriptional regulator which is involved in the adaptive response to starvation and acts by directly or indirectly controlling the expression of numerous genes in response to nutrient availability. During rapid exponential growth, CodY is highly active and represses genes whose products allow adaptation to nutrient depletion.</text>
</comment>
<comment type="interaction">
    <interactant intactId="EBI-6474032">
        <id>Q97PM1</id>
    </interactant>
    <interactant intactId="EBI-6474029">
        <id>A0A0H2UNS2</id>
        <label>SP_0443</label>
    </interactant>
    <organismsDiffer>false</organismsDiffer>
    <experiments>3</experiments>
</comment>
<comment type="interaction">
    <interactant intactId="EBI-6474032">
        <id>Q97PM1</id>
    </interactant>
    <interactant intactId="EBI-3989787">
        <id>E7DN82</id>
    </interactant>
    <organismsDiffer>true</organismsDiffer>
    <experiments>2</experiments>
</comment>
<comment type="subcellular location">
    <subcellularLocation>
        <location evidence="1">Cytoplasm</location>
    </subcellularLocation>
</comment>
<comment type="similarity">
    <text evidence="1">Belongs to the CodY family.</text>
</comment>
<reference key="1">
    <citation type="journal article" date="2001" name="Science">
        <title>Complete genome sequence of a virulent isolate of Streptococcus pneumoniae.</title>
        <authorList>
            <person name="Tettelin H."/>
            <person name="Nelson K.E."/>
            <person name="Paulsen I.T."/>
            <person name="Eisen J.A."/>
            <person name="Read T.D."/>
            <person name="Peterson S.N."/>
            <person name="Heidelberg J.F."/>
            <person name="DeBoy R.T."/>
            <person name="Haft D.H."/>
            <person name="Dodson R.J."/>
            <person name="Durkin A.S."/>
            <person name="Gwinn M.L."/>
            <person name="Kolonay J.F."/>
            <person name="Nelson W.C."/>
            <person name="Peterson J.D."/>
            <person name="Umayam L.A."/>
            <person name="White O."/>
            <person name="Salzberg S.L."/>
            <person name="Lewis M.R."/>
            <person name="Radune D."/>
            <person name="Holtzapple E.K."/>
            <person name="Khouri H.M."/>
            <person name="Wolf A.M."/>
            <person name="Utterback T.R."/>
            <person name="Hansen C.L."/>
            <person name="McDonald L.A."/>
            <person name="Feldblyum T.V."/>
            <person name="Angiuoli S.V."/>
            <person name="Dickinson T."/>
            <person name="Hickey E.K."/>
            <person name="Holt I.E."/>
            <person name="Loftus B.J."/>
            <person name="Yang F."/>
            <person name="Smith H.O."/>
            <person name="Venter J.C."/>
            <person name="Dougherty B.A."/>
            <person name="Morrison D.A."/>
            <person name="Hollingshead S.K."/>
            <person name="Fraser C.M."/>
        </authorList>
    </citation>
    <scope>NUCLEOTIDE SEQUENCE [LARGE SCALE GENOMIC DNA]</scope>
    <source>
        <strain>ATCC BAA-334 / TIGR4</strain>
    </source>
</reference>
<evidence type="ECO:0000255" key="1">
    <source>
        <dbReference type="HAMAP-Rule" id="MF_00621"/>
    </source>
</evidence>
<feature type="chain" id="PRO_0000213242" description="Global transcriptional regulator CodY">
    <location>
        <begin position="1"/>
        <end position="262"/>
    </location>
</feature>
<feature type="DNA-binding region" description="H-T-H motif" evidence="1">
    <location>
        <begin position="207"/>
        <end position="226"/>
    </location>
</feature>
<feature type="region of interest" description="GAF domain" evidence="1">
    <location>
        <begin position="1"/>
        <end position="159"/>
    </location>
</feature>
<name>CODY_STRPN</name>
<organism>
    <name type="scientific">Streptococcus pneumoniae serotype 4 (strain ATCC BAA-334 / TIGR4)</name>
    <dbReference type="NCBI Taxonomy" id="170187"/>
    <lineage>
        <taxon>Bacteria</taxon>
        <taxon>Bacillati</taxon>
        <taxon>Bacillota</taxon>
        <taxon>Bacilli</taxon>
        <taxon>Lactobacillales</taxon>
        <taxon>Streptococcaceae</taxon>
        <taxon>Streptococcus</taxon>
    </lineage>
</organism>
<gene>
    <name evidence="1" type="primary">codY</name>
    <name type="ordered locus">SP_1584</name>
</gene>
<dbReference type="EMBL" id="AE005672">
    <property type="protein sequence ID" value="AAK75670.1"/>
    <property type="molecule type" value="Genomic_DNA"/>
</dbReference>
<dbReference type="PIR" id="E95184">
    <property type="entry name" value="E95184"/>
</dbReference>
<dbReference type="RefSeq" id="WP_000940729.1">
    <property type="nucleotide sequence ID" value="NZ_CP155539.1"/>
</dbReference>
<dbReference type="SMR" id="Q97PM1"/>
<dbReference type="IntAct" id="Q97PM1">
    <property type="interactions" value="2"/>
</dbReference>
<dbReference type="PaxDb" id="170187-SP_1584"/>
<dbReference type="EnsemblBacteria" id="AAK75670">
    <property type="protein sequence ID" value="AAK75670"/>
    <property type="gene ID" value="SP_1584"/>
</dbReference>
<dbReference type="KEGG" id="spn:SP_1584"/>
<dbReference type="eggNOG" id="COG4465">
    <property type="taxonomic scope" value="Bacteria"/>
</dbReference>
<dbReference type="PhylomeDB" id="Q97PM1"/>
<dbReference type="BioCyc" id="SPNE170187:G1FZB-1603-MONOMER"/>
<dbReference type="Proteomes" id="UP000000585">
    <property type="component" value="Chromosome"/>
</dbReference>
<dbReference type="GO" id="GO:0005737">
    <property type="term" value="C:cytoplasm"/>
    <property type="evidence" value="ECO:0007669"/>
    <property type="project" value="UniProtKB-SubCell"/>
</dbReference>
<dbReference type="GO" id="GO:0003677">
    <property type="term" value="F:DNA binding"/>
    <property type="evidence" value="ECO:0007669"/>
    <property type="project" value="UniProtKB-UniRule"/>
</dbReference>
<dbReference type="GO" id="GO:0003700">
    <property type="term" value="F:DNA-binding transcription factor activity"/>
    <property type="evidence" value="ECO:0007669"/>
    <property type="project" value="InterPro"/>
</dbReference>
<dbReference type="GO" id="GO:0005525">
    <property type="term" value="F:GTP binding"/>
    <property type="evidence" value="ECO:0007669"/>
    <property type="project" value="InterPro"/>
</dbReference>
<dbReference type="GO" id="GO:0045892">
    <property type="term" value="P:negative regulation of DNA-templated transcription"/>
    <property type="evidence" value="ECO:0007669"/>
    <property type="project" value="UniProtKB-UniRule"/>
</dbReference>
<dbReference type="CDD" id="cd00090">
    <property type="entry name" value="HTH_ARSR"/>
    <property type="match status" value="1"/>
</dbReference>
<dbReference type="FunFam" id="1.10.10.10:FF:000034">
    <property type="entry name" value="GTP-sensing transcriptional pleiotropic repressor CodY"/>
    <property type="match status" value="1"/>
</dbReference>
<dbReference type="FunFam" id="3.30.450.40:FF:000003">
    <property type="entry name" value="GTP-sensing transcriptional pleiotropic repressor CodY"/>
    <property type="match status" value="1"/>
</dbReference>
<dbReference type="Gene3D" id="3.30.450.40">
    <property type="match status" value="1"/>
</dbReference>
<dbReference type="Gene3D" id="1.10.10.10">
    <property type="entry name" value="Winged helix-like DNA-binding domain superfamily/Winged helix DNA-binding domain"/>
    <property type="match status" value="1"/>
</dbReference>
<dbReference type="HAMAP" id="MF_00621">
    <property type="entry name" value="HTH_type_CodY"/>
    <property type="match status" value="1"/>
</dbReference>
<dbReference type="InterPro" id="IPR011991">
    <property type="entry name" value="ArsR-like_HTH"/>
</dbReference>
<dbReference type="InterPro" id="IPR014154">
    <property type="entry name" value="CodY"/>
</dbReference>
<dbReference type="InterPro" id="IPR029016">
    <property type="entry name" value="GAF-like_dom_sf"/>
</dbReference>
<dbReference type="InterPro" id="IPR013198">
    <property type="entry name" value="GTP_trans_reg_CodY_C"/>
</dbReference>
<dbReference type="InterPro" id="IPR010312">
    <property type="entry name" value="Transc_reg_CodY_N"/>
</dbReference>
<dbReference type="InterPro" id="IPR036388">
    <property type="entry name" value="WH-like_DNA-bd_sf"/>
</dbReference>
<dbReference type="InterPro" id="IPR036390">
    <property type="entry name" value="WH_DNA-bd_sf"/>
</dbReference>
<dbReference type="NCBIfam" id="TIGR02787">
    <property type="entry name" value="codY_Gpos"/>
    <property type="match status" value="1"/>
</dbReference>
<dbReference type="NCBIfam" id="NF003170">
    <property type="entry name" value="PRK04158.1"/>
    <property type="match status" value="1"/>
</dbReference>
<dbReference type="PANTHER" id="PTHR40062:SF1">
    <property type="entry name" value="GLOBAL TRANSCRIPTIONAL REGULATOR CODY"/>
    <property type="match status" value="1"/>
</dbReference>
<dbReference type="PANTHER" id="PTHR40062">
    <property type="entry name" value="GTP-SENSING TRANSCRIPTIONAL PLEIOTROPIC REPRESSOR CODY"/>
    <property type="match status" value="1"/>
</dbReference>
<dbReference type="Pfam" id="PF06018">
    <property type="entry name" value="CodY"/>
    <property type="match status" value="1"/>
</dbReference>
<dbReference type="Pfam" id="PF08222">
    <property type="entry name" value="HTH_CodY"/>
    <property type="match status" value="1"/>
</dbReference>
<dbReference type="PIRSF" id="PIRSF011572">
    <property type="entry name" value="GTP_sensing_CodY"/>
    <property type="match status" value="1"/>
</dbReference>
<dbReference type="SUPFAM" id="SSF46785">
    <property type="entry name" value="Winged helix' DNA-binding domain"/>
    <property type="match status" value="1"/>
</dbReference>
<protein>
    <recommendedName>
        <fullName evidence="1">Global transcriptional regulator CodY</fullName>
    </recommendedName>
</protein>
<sequence length="262" mass="29770">MAHLLEKTRKITSILKRSEEQLQDELPYNAITRQLADIIHCNACIINSKGRLLGYFMRYKTNTDRVEQFFQTKIFPDDYVQGANMIYETEANLPVEHDMSIFPIESRDDFPDGLTTIAPIHVSGIRLGSLIIWRNDKKFEDEDLVLVEIASTVVGIQLLNFQREEDEKNIRRRTAVTMAVNTLSYSELRAVSAILGELNGNEGKLTASVIADRIGITRSVIVNALRKLESAGIIESRSLGMKGTYLKVLISDIFEEVKKRDY</sequence>
<accession>Q97PM1</accession>